<keyword id="KW-0067">ATP-binding</keyword>
<keyword id="KW-0347">Helicase</keyword>
<keyword id="KW-0378">Hydrolase</keyword>
<keyword id="KW-0479">Metal-binding</keyword>
<keyword id="KW-0547">Nucleotide-binding</keyword>
<keyword id="KW-0539">Nucleus</keyword>
<keyword id="KW-1185">Reference proteome</keyword>
<keyword id="KW-0677">Repeat</keyword>
<keyword id="KW-0862">Zinc</keyword>
<keyword id="KW-0863">Zinc-finger</keyword>
<evidence type="ECO:0000255" key="1"/>
<evidence type="ECO:0000255" key="2">
    <source>
        <dbReference type="PROSITE-ProRule" id="PRU00053"/>
    </source>
</evidence>
<evidence type="ECO:0000255" key="3">
    <source>
        <dbReference type="PROSITE-ProRule" id="PRU00146"/>
    </source>
</evidence>
<evidence type="ECO:0000255" key="4">
    <source>
        <dbReference type="PROSITE-ProRule" id="PRU00541"/>
    </source>
</evidence>
<evidence type="ECO:0000255" key="5">
    <source>
        <dbReference type="PROSITE-ProRule" id="PRU00542"/>
    </source>
</evidence>
<evidence type="ECO:0000256" key="6">
    <source>
        <dbReference type="SAM" id="MobiDB-lite"/>
    </source>
</evidence>
<evidence type="ECO:0000269" key="7">
    <source>
    </source>
</evidence>
<evidence type="ECO:0000269" key="8">
    <source>
    </source>
</evidence>
<evidence type="ECO:0000269" key="9">
    <source>
    </source>
</evidence>
<evidence type="ECO:0000269" key="10">
    <source>
    </source>
</evidence>
<evidence type="ECO:0000269" key="11">
    <source>
    </source>
</evidence>
<evidence type="ECO:0000269" key="12">
    <source>
    </source>
</evidence>
<evidence type="ECO:0000303" key="13">
    <source>
    </source>
</evidence>
<evidence type="ECO:0000305" key="14"/>
<evidence type="ECO:0000312" key="15">
    <source>
        <dbReference type="EMBL" id="AAG29838.1"/>
    </source>
</evidence>
<evidence type="ECO:0000312" key="16">
    <source>
        <dbReference type="EMBL" id="CCD62685.1"/>
    </source>
</evidence>
<evidence type="ECO:0000312" key="17">
    <source>
        <dbReference type="WormBase" id="F26F12.7"/>
    </source>
</evidence>
<gene>
    <name evidence="17" type="primary">let-418</name>
    <name evidence="13" type="synonym">evl-11</name>
    <name evidence="17" type="ORF">F26F12.7</name>
</gene>
<protein>
    <recommendedName>
        <fullName evidence="16">Protein let-418</fullName>
    </recommendedName>
    <alternativeName>
        <fullName>Lethal protein 418</fullName>
    </alternativeName>
</protein>
<reference evidence="14 15" key="1">
    <citation type="journal article" date="2000" name="Development">
        <title>The C. elegans Mi-2 chromatin-remodelling proteins function in vulval cell fate determination.</title>
        <authorList>
            <person name="von Zelewsky T."/>
            <person name="Palladino F."/>
            <person name="Brunschwig K."/>
            <person name="Tobler H."/>
            <person name="Hajnal A."/>
            <person name="Mueller F."/>
        </authorList>
    </citation>
    <scope>NUCLEOTIDE SEQUENCE [MRNA]</scope>
    <scope>FUNCTION</scope>
    <scope>SUBCELLULAR LOCATION</scope>
    <source>
        <strain evidence="15">Bristol N2</strain>
    </source>
</reference>
<reference key="2">
    <citation type="journal article" date="1998" name="Science">
        <title>Genome sequence of the nematode C. elegans: a platform for investigating biology.</title>
        <authorList>
            <consortium name="The C. elegans sequencing consortium"/>
        </authorList>
    </citation>
    <scope>NUCLEOTIDE SEQUENCE [LARGE SCALE GENOMIC DNA]</scope>
    <source>
        <strain>Bristol N2</strain>
    </source>
</reference>
<reference evidence="14" key="3">
    <citation type="journal article" date="2002" name="Cell">
        <title>MEP-1 and a homolog of the NURD complex component Mi-2 act together to maintain germline-soma distinctions in C. elegans.</title>
        <authorList>
            <person name="Unhavaithaya Y."/>
            <person name="Shin T.H."/>
            <person name="Miliaras N."/>
            <person name="Lee J."/>
            <person name="Oyama T."/>
            <person name="Mello C.C."/>
        </authorList>
    </citation>
    <scope>FUNCTION</scope>
    <scope>DEVELOPMENTAL STAGE</scope>
    <scope>TISSUE SPECIFICITY</scope>
    <scope>INTERACTION WITH PIE-1</scope>
    <scope>DISRUPTION PHENOTYPE</scope>
</reference>
<reference evidence="14" key="4">
    <citation type="journal article" date="2007" name="Dev. Biol.">
        <title>The Mi-2 nucleosome-remodeling protein LET-418 is targeted via LIN-1/ETS to the promoter of lin-39/Hox during vulval development in C. elegans.</title>
        <authorList>
            <person name="Guerry F."/>
            <person name="Marti C.O."/>
            <person name="Zhang Y."/>
            <person name="Moroni P.S."/>
            <person name="Jaquiery E."/>
            <person name="Muller F."/>
        </authorList>
    </citation>
    <scope>FUNCTION</scope>
    <scope>INTERACTION WITH LIN-1</scope>
    <scope>SUBCELLULAR LOCATION</scope>
</reference>
<reference evidence="14" key="5">
    <citation type="journal article" date="2007" name="DNA Res.">
        <title>A genome-wide survey and systematic RNAi-based characterization of helicase-like genes in Caenorhabditis elegans.</title>
        <authorList>
            <person name="Eki T."/>
            <person name="Ishihara T."/>
            <person name="Katsura I."/>
            <person name="Hanaoka F."/>
        </authorList>
    </citation>
    <scope>DISRUPTION PHENOTYPE</scope>
</reference>
<reference evidence="14" key="6">
    <citation type="journal article" date="2010" name="PLoS ONE">
        <title>Different Mi-2 complexes for various developmental functions in Caenorhabditis elegans.</title>
        <authorList>
            <person name="Passannante M."/>
            <person name="Marti C.O."/>
            <person name="Pfefferli C."/>
            <person name="Moroni P.S."/>
            <person name="Kaeser-Pebernard S."/>
            <person name="Puoti A."/>
            <person name="Hunziker P."/>
            <person name="Wicky C."/>
            <person name="Muller F."/>
        </authorList>
    </citation>
    <scope>FUNCTION</scope>
    <scope>IDENTIFICATION IN THE MEC AND NURD COMPLEX</scope>
</reference>
<reference key="7">
    <citation type="journal article" date="2018" name="PLoS Genet.">
        <title>Evolutionary plasticity in the innate immune function of Akirin.</title>
        <authorList>
            <person name="Polanowska J."/>
            <person name="Chen J.X."/>
            <person name="Soule J."/>
            <person name="Omi S."/>
            <person name="Belougne J."/>
            <person name="Taffoni C."/>
            <person name="Pujol N."/>
            <person name="Selbach M."/>
            <person name="Zugasti O."/>
            <person name="Ewbank J.J."/>
        </authorList>
    </citation>
    <scope>FUNCTION</scope>
    <scope>INTERACTION WITH AKIR-1</scope>
</reference>
<feature type="chain" id="PRO_0000419006" description="Protein let-418">
    <location>
        <begin position="1"/>
        <end position="1829"/>
    </location>
</feature>
<feature type="domain" description="Chromo 1" evidence="2">
    <location>
        <begin position="401"/>
        <end position="458"/>
    </location>
</feature>
<feature type="domain" description="Chromo 2" evidence="2">
    <location>
        <begin position="489"/>
        <end position="550"/>
    </location>
</feature>
<feature type="domain" description="Helicase ATP-binding" evidence="4">
    <location>
        <begin position="614"/>
        <end position="798"/>
    </location>
</feature>
<feature type="domain" description="Helicase C-terminal" evidence="5">
    <location>
        <begin position="930"/>
        <end position="1093"/>
    </location>
</feature>
<feature type="zinc finger region" description="PHD-type 1" evidence="3">
    <location>
        <begin position="256"/>
        <end position="303"/>
    </location>
</feature>
<feature type="zinc finger region" description="PHD-type 2" evidence="3">
    <location>
        <begin position="317"/>
        <end position="365"/>
    </location>
</feature>
<feature type="region of interest" description="Disordered" evidence="6">
    <location>
        <begin position="1"/>
        <end position="81"/>
    </location>
</feature>
<feature type="region of interest" description="Disordered" evidence="6">
    <location>
        <begin position="147"/>
        <end position="198"/>
    </location>
</feature>
<feature type="region of interest" description="Disordered" evidence="6">
    <location>
        <begin position="1168"/>
        <end position="1198"/>
    </location>
</feature>
<feature type="region of interest" description="Disordered" evidence="6">
    <location>
        <begin position="1234"/>
        <end position="1289"/>
    </location>
</feature>
<feature type="region of interest" description="Disordered" evidence="6">
    <location>
        <begin position="1415"/>
        <end position="1495"/>
    </location>
</feature>
<feature type="region of interest" description="Disordered" evidence="6">
    <location>
        <begin position="1745"/>
        <end position="1829"/>
    </location>
</feature>
<feature type="short sequence motif" description="DEAH box" evidence="1">
    <location>
        <begin position="749"/>
        <end position="752"/>
    </location>
</feature>
<feature type="compositionally biased region" description="Acidic residues" evidence="6">
    <location>
        <begin position="1"/>
        <end position="17"/>
    </location>
</feature>
<feature type="compositionally biased region" description="Acidic residues" evidence="6">
    <location>
        <begin position="25"/>
        <end position="39"/>
    </location>
</feature>
<feature type="compositionally biased region" description="Basic residues" evidence="6">
    <location>
        <begin position="48"/>
        <end position="63"/>
    </location>
</feature>
<feature type="compositionally biased region" description="Acidic residues" evidence="6">
    <location>
        <begin position="1177"/>
        <end position="1186"/>
    </location>
</feature>
<feature type="compositionally biased region" description="Polar residues" evidence="6">
    <location>
        <begin position="1234"/>
        <end position="1247"/>
    </location>
</feature>
<feature type="compositionally biased region" description="Polar residues" evidence="6">
    <location>
        <begin position="1418"/>
        <end position="1427"/>
    </location>
</feature>
<feature type="compositionally biased region" description="Basic and acidic residues" evidence="6">
    <location>
        <begin position="1429"/>
        <end position="1444"/>
    </location>
</feature>
<feature type="compositionally biased region" description="Polar residues" evidence="6">
    <location>
        <begin position="1446"/>
        <end position="1455"/>
    </location>
</feature>
<feature type="compositionally biased region" description="Basic and acidic residues" evidence="6">
    <location>
        <begin position="1474"/>
        <end position="1490"/>
    </location>
</feature>
<feature type="compositionally biased region" description="Acidic residues" evidence="6">
    <location>
        <begin position="1749"/>
        <end position="1773"/>
    </location>
</feature>
<feature type="compositionally biased region" description="Low complexity" evidence="6">
    <location>
        <begin position="1792"/>
        <end position="1811"/>
    </location>
</feature>
<feature type="compositionally biased region" description="Acidic residues" evidence="6">
    <location>
        <begin position="1819"/>
        <end position="1829"/>
    </location>
</feature>
<feature type="binding site" evidence="4">
    <location>
        <begin position="627"/>
        <end position="634"/>
    </location>
    <ligand>
        <name>ATP</name>
        <dbReference type="ChEBI" id="CHEBI:30616"/>
    </ligand>
</feature>
<dbReference type="EMBL" id="AF308445">
    <property type="protein sequence ID" value="AAG29838.1"/>
    <property type="molecule type" value="mRNA"/>
</dbReference>
<dbReference type="EMBL" id="BX284605">
    <property type="protein sequence ID" value="CCD62685.1"/>
    <property type="molecule type" value="Genomic_DNA"/>
</dbReference>
<dbReference type="PIR" id="T34239">
    <property type="entry name" value="T34239"/>
</dbReference>
<dbReference type="RefSeq" id="NP_504523.1">
    <property type="nucleotide sequence ID" value="NM_072122.6"/>
</dbReference>
<dbReference type="SMR" id="G5EBZ4"/>
<dbReference type="BioGRID" id="44019">
    <property type="interactions" value="15"/>
</dbReference>
<dbReference type="FunCoup" id="G5EBZ4">
    <property type="interactions" value="2679"/>
</dbReference>
<dbReference type="IntAct" id="G5EBZ4">
    <property type="interactions" value="2"/>
</dbReference>
<dbReference type="STRING" id="6239.F26F12.7.1"/>
<dbReference type="PaxDb" id="6239-F26F12.7"/>
<dbReference type="PeptideAtlas" id="G5EBZ4"/>
<dbReference type="EnsemblMetazoa" id="F26F12.7.1">
    <property type="protein sequence ID" value="F26F12.7.1"/>
    <property type="gene ID" value="WBGene00002637"/>
</dbReference>
<dbReference type="GeneID" id="178970"/>
<dbReference type="KEGG" id="cel:CELE_F26F12.7"/>
<dbReference type="AGR" id="WB:WBGene00002637"/>
<dbReference type="CTD" id="178970"/>
<dbReference type="WormBase" id="F26F12.7">
    <property type="protein sequence ID" value="CE17716"/>
    <property type="gene ID" value="WBGene00002637"/>
    <property type="gene designation" value="let-418"/>
</dbReference>
<dbReference type="eggNOG" id="KOG0383">
    <property type="taxonomic scope" value="Eukaryota"/>
</dbReference>
<dbReference type="GeneTree" id="ENSGT00940000169383"/>
<dbReference type="HOGENOM" id="CLU_000315_22_1_1"/>
<dbReference type="InParanoid" id="G5EBZ4"/>
<dbReference type="OMA" id="CKEGGWL"/>
<dbReference type="OrthoDB" id="5857104at2759"/>
<dbReference type="PhylomeDB" id="G5EBZ4"/>
<dbReference type="Reactome" id="R-CEL-4551638">
    <property type="pathway name" value="SUMOylation of chromatin organization proteins"/>
</dbReference>
<dbReference type="Reactome" id="R-CEL-6804758">
    <property type="pathway name" value="Regulation of TP53 Activity through Acetylation"/>
</dbReference>
<dbReference type="Reactome" id="R-CEL-9031628">
    <property type="pathway name" value="NGF-stimulated transcription"/>
</dbReference>
<dbReference type="PRO" id="PR:G5EBZ4"/>
<dbReference type="Proteomes" id="UP000001940">
    <property type="component" value="Chromosome V"/>
</dbReference>
<dbReference type="Bgee" id="WBGene00002637">
    <property type="expression patterns" value="Expressed in embryo and 4 other cell types or tissues"/>
</dbReference>
<dbReference type="GO" id="GO:0000785">
    <property type="term" value="C:chromatin"/>
    <property type="evidence" value="ECO:0000318"/>
    <property type="project" value="GO_Central"/>
</dbReference>
<dbReference type="GO" id="GO:0005634">
    <property type="term" value="C:nucleus"/>
    <property type="evidence" value="ECO:0000318"/>
    <property type="project" value="GO_Central"/>
</dbReference>
<dbReference type="GO" id="GO:0016581">
    <property type="term" value="C:NuRD complex"/>
    <property type="evidence" value="ECO:0000250"/>
    <property type="project" value="WormBase"/>
</dbReference>
<dbReference type="GO" id="GO:0090571">
    <property type="term" value="C:RNA polymerase II transcription repressor complex"/>
    <property type="evidence" value="ECO:0000314"/>
    <property type="project" value="WormBase"/>
</dbReference>
<dbReference type="GO" id="GO:0005524">
    <property type="term" value="F:ATP binding"/>
    <property type="evidence" value="ECO:0007669"/>
    <property type="project" value="UniProtKB-KW"/>
</dbReference>
<dbReference type="GO" id="GO:0016887">
    <property type="term" value="F:ATP hydrolysis activity"/>
    <property type="evidence" value="ECO:0000318"/>
    <property type="project" value="GO_Central"/>
</dbReference>
<dbReference type="GO" id="GO:0140658">
    <property type="term" value="F:ATP-dependent chromatin remodeler activity"/>
    <property type="evidence" value="ECO:0000318"/>
    <property type="project" value="GO_Central"/>
</dbReference>
<dbReference type="GO" id="GO:0003682">
    <property type="term" value="F:chromatin binding"/>
    <property type="evidence" value="ECO:0000318"/>
    <property type="project" value="GO_Central"/>
</dbReference>
<dbReference type="GO" id="GO:0003677">
    <property type="term" value="F:DNA binding"/>
    <property type="evidence" value="ECO:0000318"/>
    <property type="project" value="GO_Central"/>
</dbReference>
<dbReference type="GO" id="GO:0004386">
    <property type="term" value="F:helicase activity"/>
    <property type="evidence" value="ECO:0007669"/>
    <property type="project" value="UniProtKB-KW"/>
</dbReference>
<dbReference type="GO" id="GO:0042393">
    <property type="term" value="F:histone binding"/>
    <property type="evidence" value="ECO:0000318"/>
    <property type="project" value="GO_Central"/>
</dbReference>
<dbReference type="GO" id="GO:0061629">
    <property type="term" value="F:RNA polymerase II-specific DNA-binding transcription factor binding"/>
    <property type="evidence" value="ECO:0000353"/>
    <property type="project" value="WormBase"/>
</dbReference>
<dbReference type="GO" id="GO:0008270">
    <property type="term" value="F:zinc ion binding"/>
    <property type="evidence" value="ECO:0007669"/>
    <property type="project" value="UniProtKB-KW"/>
</dbReference>
<dbReference type="GO" id="GO:0006338">
    <property type="term" value="P:chromatin remodeling"/>
    <property type="evidence" value="ECO:0000318"/>
    <property type="project" value="GO_Central"/>
</dbReference>
<dbReference type="GO" id="GO:0048557">
    <property type="term" value="P:embryonic digestive tract morphogenesis"/>
    <property type="evidence" value="ECO:0000316"/>
    <property type="project" value="WormBase"/>
</dbReference>
<dbReference type="GO" id="GO:0000122">
    <property type="term" value="P:negative regulation of transcription by RNA polymerase II"/>
    <property type="evidence" value="ECO:0000315"/>
    <property type="project" value="WormBase"/>
</dbReference>
<dbReference type="GO" id="GO:0040027">
    <property type="term" value="P:negative regulation of vulval development"/>
    <property type="evidence" value="ECO:0000315"/>
    <property type="project" value="WormBase"/>
</dbReference>
<dbReference type="CDD" id="cd18667">
    <property type="entry name" value="CD1_tandem_CHD3-4_like"/>
    <property type="match status" value="1"/>
</dbReference>
<dbReference type="CDD" id="cd18662">
    <property type="entry name" value="CD2_tandem_CHD3-4_like"/>
    <property type="match status" value="1"/>
</dbReference>
<dbReference type="CDD" id="cd15531">
    <property type="entry name" value="PHD1_CHD_II"/>
    <property type="match status" value="1"/>
</dbReference>
<dbReference type="CDD" id="cd18793">
    <property type="entry name" value="SF2_C_SNF"/>
    <property type="match status" value="1"/>
</dbReference>
<dbReference type="FunFam" id="3.40.50.10810:FF:000001">
    <property type="entry name" value="chromodomain-helicase-DNA-binding protein 3 isoform X1"/>
    <property type="match status" value="1"/>
</dbReference>
<dbReference type="FunFam" id="3.40.50.300:FF:000015">
    <property type="entry name" value="chromodomain-helicase-DNA-binding protein 9 isoform X1"/>
    <property type="match status" value="1"/>
</dbReference>
<dbReference type="Gene3D" id="2.40.50.40">
    <property type="match status" value="2"/>
</dbReference>
<dbReference type="Gene3D" id="1.10.10.60">
    <property type="entry name" value="Homeodomain-like"/>
    <property type="match status" value="1"/>
</dbReference>
<dbReference type="Gene3D" id="3.40.50.300">
    <property type="entry name" value="P-loop containing nucleotide triphosphate hydrolases"/>
    <property type="match status" value="1"/>
</dbReference>
<dbReference type="Gene3D" id="3.40.50.10810">
    <property type="entry name" value="Tandem AAA-ATPase domain"/>
    <property type="match status" value="1"/>
</dbReference>
<dbReference type="Gene3D" id="3.30.40.10">
    <property type="entry name" value="Zinc/RING finger domain, C3HC4 (zinc finger)"/>
    <property type="match status" value="2"/>
</dbReference>
<dbReference type="InterPro" id="IPR012957">
    <property type="entry name" value="CHD_C2"/>
</dbReference>
<dbReference type="InterPro" id="IPR009462">
    <property type="entry name" value="CHD_II_SANT-like"/>
</dbReference>
<dbReference type="InterPro" id="IPR012958">
    <property type="entry name" value="CHD_N"/>
</dbReference>
<dbReference type="InterPro" id="IPR016197">
    <property type="entry name" value="Chromo-like_dom_sf"/>
</dbReference>
<dbReference type="InterPro" id="IPR000953">
    <property type="entry name" value="Chromo/chromo_shadow_dom"/>
</dbReference>
<dbReference type="InterPro" id="IPR023780">
    <property type="entry name" value="Chromo_domain"/>
</dbReference>
<dbReference type="InterPro" id="IPR002464">
    <property type="entry name" value="DNA/RNA_helicase_DEAH_CS"/>
</dbReference>
<dbReference type="InterPro" id="IPR009463">
    <property type="entry name" value="DUF1087"/>
</dbReference>
<dbReference type="InterPro" id="IPR014001">
    <property type="entry name" value="Helicase_ATP-bd"/>
</dbReference>
<dbReference type="InterPro" id="IPR001650">
    <property type="entry name" value="Helicase_C-like"/>
</dbReference>
<dbReference type="InterPro" id="IPR027417">
    <property type="entry name" value="P-loop_NTPase"/>
</dbReference>
<dbReference type="InterPro" id="IPR038718">
    <property type="entry name" value="SNF2-like_sf"/>
</dbReference>
<dbReference type="InterPro" id="IPR049730">
    <property type="entry name" value="SNF2/RAD54-like_C"/>
</dbReference>
<dbReference type="InterPro" id="IPR000330">
    <property type="entry name" value="SNF2_N"/>
</dbReference>
<dbReference type="InterPro" id="IPR019786">
    <property type="entry name" value="Zinc_finger_PHD-type_CS"/>
</dbReference>
<dbReference type="InterPro" id="IPR011011">
    <property type="entry name" value="Znf_FYVE_PHD"/>
</dbReference>
<dbReference type="InterPro" id="IPR001965">
    <property type="entry name" value="Znf_PHD"/>
</dbReference>
<dbReference type="InterPro" id="IPR019787">
    <property type="entry name" value="Znf_PHD-finger"/>
</dbReference>
<dbReference type="InterPro" id="IPR013083">
    <property type="entry name" value="Znf_RING/FYVE/PHD"/>
</dbReference>
<dbReference type="PANTHER" id="PTHR45623:SF17">
    <property type="entry name" value="CHROMODOMAIN-HELICASE-DNA-BINDING PROTEIN 3-RELATED"/>
    <property type="match status" value="1"/>
</dbReference>
<dbReference type="PANTHER" id="PTHR45623">
    <property type="entry name" value="CHROMODOMAIN-HELICASE-DNA-BINDING PROTEIN 3-RELATED-RELATED"/>
    <property type="match status" value="1"/>
</dbReference>
<dbReference type="Pfam" id="PF08074">
    <property type="entry name" value="CHDCT2"/>
    <property type="match status" value="1"/>
</dbReference>
<dbReference type="Pfam" id="PF06461">
    <property type="entry name" value="CHDII_SANT-like"/>
    <property type="match status" value="1"/>
</dbReference>
<dbReference type="Pfam" id="PF08073">
    <property type="entry name" value="CHDNT"/>
    <property type="match status" value="1"/>
</dbReference>
<dbReference type="Pfam" id="PF00385">
    <property type="entry name" value="Chromo"/>
    <property type="match status" value="1"/>
</dbReference>
<dbReference type="Pfam" id="PF06465">
    <property type="entry name" value="DUF1087"/>
    <property type="match status" value="1"/>
</dbReference>
<dbReference type="Pfam" id="PF00271">
    <property type="entry name" value="Helicase_C"/>
    <property type="match status" value="1"/>
</dbReference>
<dbReference type="Pfam" id="PF00628">
    <property type="entry name" value="PHD"/>
    <property type="match status" value="2"/>
</dbReference>
<dbReference type="Pfam" id="PF00176">
    <property type="entry name" value="SNF2-rel_dom"/>
    <property type="match status" value="1"/>
</dbReference>
<dbReference type="SMART" id="SM00298">
    <property type="entry name" value="CHROMO"/>
    <property type="match status" value="2"/>
</dbReference>
<dbReference type="SMART" id="SM00487">
    <property type="entry name" value="DEXDc"/>
    <property type="match status" value="1"/>
</dbReference>
<dbReference type="SMART" id="SM01146">
    <property type="entry name" value="DUF1086"/>
    <property type="match status" value="1"/>
</dbReference>
<dbReference type="SMART" id="SM01147">
    <property type="entry name" value="DUF1087"/>
    <property type="match status" value="1"/>
</dbReference>
<dbReference type="SMART" id="SM00490">
    <property type="entry name" value="HELICc"/>
    <property type="match status" value="1"/>
</dbReference>
<dbReference type="SMART" id="SM00249">
    <property type="entry name" value="PHD"/>
    <property type="match status" value="2"/>
</dbReference>
<dbReference type="SUPFAM" id="SSF54160">
    <property type="entry name" value="Chromo domain-like"/>
    <property type="match status" value="2"/>
</dbReference>
<dbReference type="SUPFAM" id="SSF57903">
    <property type="entry name" value="FYVE/PHD zinc finger"/>
    <property type="match status" value="1"/>
</dbReference>
<dbReference type="SUPFAM" id="SSF52540">
    <property type="entry name" value="P-loop containing nucleoside triphosphate hydrolases"/>
    <property type="match status" value="2"/>
</dbReference>
<dbReference type="PROSITE" id="PS50013">
    <property type="entry name" value="CHROMO_2"/>
    <property type="match status" value="2"/>
</dbReference>
<dbReference type="PROSITE" id="PS00690">
    <property type="entry name" value="DEAH_ATP_HELICASE"/>
    <property type="match status" value="1"/>
</dbReference>
<dbReference type="PROSITE" id="PS51192">
    <property type="entry name" value="HELICASE_ATP_BIND_1"/>
    <property type="match status" value="1"/>
</dbReference>
<dbReference type="PROSITE" id="PS51194">
    <property type="entry name" value="HELICASE_CTER"/>
    <property type="match status" value="1"/>
</dbReference>
<dbReference type="PROSITE" id="PS01359">
    <property type="entry name" value="ZF_PHD_1"/>
    <property type="match status" value="2"/>
</dbReference>
<dbReference type="PROSITE" id="PS50016">
    <property type="entry name" value="ZF_PHD_2"/>
    <property type="match status" value="2"/>
</dbReference>
<name>LE418_CAEEL</name>
<sequence>MSTEEDPSLVDAEESMEEGSVTQDATEETEEEEEQEQGDEAGPSERKRSSRKKGGKGGKKGSKKSAAAASKVEIPDPYNSTSEEVCAAIGLTDVEFDYDEEEFQGISNLKTFSSIIKPQILEANPGTNVSKMYPMFQVKYKEYQDHMAAQGKPVQKQARGSKTPAVSTPVIPPRSAPTKTRSARRKRRDSDAPDSDQEFEAFIKQQEQLEDDLVKDKEDARIKRAAEREEKKKGALEAARAAKKAKLEKGEEAENNDYCEECKQDGELLLCDTCPRAYHTVCIDENMEEPPEGDWSCAHCIEHGPEVVKEEPAKQNDEFCKICKETENLLLCDSCVCSFHAYCIDPPLTEVPKEETWSCPRCETVKPEHKIEKILCWRWKEIPYPEPLEAGKEASSDDAMLKPPRKMEPRREREFFVKWKYLSYWQCSWVSEMLLEVHFRMLILLYWRKNDSDAPPEFEESVTSRHHSDNDPYKLRERFYQYGIKPEWMQIHRIINHQSYAKSQQDYLVKWKELSYDQATWERDDSNIANYEEAIIKYWQHRESKLNEDIPKNVQKMIAKHREAKGLPPKEDEKKKKKREKIDIRKKYEVQPDYVTETGGKLHPYQLEGLNWLRHCWSNGTDAILADEMGLGKTVQSLTFLYSLMKEGHCKGPFLIAAPLSTIINWEREAEQWCPDFYVVTYVGLRDARVVLREHEFSFVEGAVRSGPKASKMKTTENMKFHVLLTSYETINMDKTILSSIEWGALVVDEAHRLKNNQSLFFKNLNEYTIHYRVLLTGTPLQNNLEELFHLLNFLSKERFNQLEAFTAEFNEISKEDQIEKLHNLLGPHMLRRLKADVLTGMPSKSELIVRVELSAMQKKWYKNILTRNFDALNVKNGGTQMSLMNVLMELKKCCNHPYLFVKAELEAPKEKNGMYEGTALIKNSGKFVLLQKMLRKLKDGGHRVLIFSQMTRMLDIMEDLCEYEGYRYERIDGSIMGQMRQDAIDRYNAPGAQQFIFLLSTRAGGLGINLATADTVIIYDSDWNPHNDIQAFSRAHRLGQKHKVMIYRFVTKKSVEEKITSVAKKKMLLNHLVVRAGLGGKEGKTMSKTELDDVLRWGTEELFSEDLDAAEGEGSEKKGAAAQEIVWDDAAVDALLDRSNKEETPAGEDGEEKAEWQNEYLSSFKVASYQTKETEGQEEEEEEETEVIKEDEKEPDPDYWEKLLKHHYEQDREIELQKLGKGKRVRKQINYASENMGTDWSKQNQTQDDDDDNESYRGSDNGDGLNSDEDDYDEKKKRRRDEEKMPPLMAKVNGQVEILGFNPRQRKAFYGAVMRWGMPPQDSHQSQWLVRDLRNKSEKVFRAYASLFMRHLCEPGADGHDTFNDGVPREGLNRQHVLGRIGLLSLVRRKVQEFEQYNGQWSMPEIQDEVLAKAANGSAQGSSRSTPKPKEEPKEEPMEKEDATETVNGATSEPATDAESEQNAPVDEPMDTDEAKEPKEEPIETEKPRAARPSFKFNICDGGFTELHSLWANEEKVARNGKEYEIWYRRHDYWLLAGVVVHGYGRFQANFNDIINDPRFSVLNEPFKEVGAEATGSDIKAKFMQRRFKLIEQSLVIEEQLRRAAHANRHLQPDNVGPLAQRFADLENIAESQANIAKESSAGNRNANAVLHKTLVQLDEILSDMKADVSRLPSTFTQLATVTERLNMTERQILSRLTTKDEDAIANRSVLPPPGPFVTPILRQQMDGIQPKFAALYSKFMSENGERMEEDEPVEAEEEEGVKQEPDDETQDSAEAPPVLSAEVNSDDSNDVPSTSAAAAVSSETAADAEPASAEDQAPTDEPEPMET</sequence>
<organism>
    <name type="scientific">Caenorhabditis elegans</name>
    <dbReference type="NCBI Taxonomy" id="6239"/>
    <lineage>
        <taxon>Eukaryota</taxon>
        <taxon>Metazoa</taxon>
        <taxon>Ecdysozoa</taxon>
        <taxon>Nematoda</taxon>
        <taxon>Chromadorea</taxon>
        <taxon>Rhabditida</taxon>
        <taxon>Rhabditina</taxon>
        <taxon>Rhabditomorpha</taxon>
        <taxon>Rhabditoidea</taxon>
        <taxon>Rhabditidae</taxon>
        <taxon>Peloderinae</taxon>
        <taxon>Caenorhabditis</taxon>
    </lineage>
</organism>
<comment type="function">
    <text evidence="7 8 9 11 12">Part of a NuRD (Nucleosome Remodeling and Deacetylase) complex which is implicated in the synMuv B pathway that negatively regulates specification of vulval cell fate (PubMed:11076750, PubMed:21060680). This negative regulation is thought to be mediated via interaction with the promoter of lin-39, a key regulator in vulva development, and is dependent on the presence lin-1 (PubMed:17466968). Contributes to negative regulation of lag-2 which is expressed in the gut during larval development (PubMed:21060680). Has a broad role in development (PubMed:21060680). In association with akir-1, plays a role in regulating the transcription of antimicrobial peptide genes in response to fungal infection (PubMed:30036395).</text>
</comment>
<comment type="subunit">
    <text evidence="8 9 11 12">Component of the MEC (MEP-1-containing complex) complex that contains let-418, mep-1 and hda-1 (PubMed:21060680). Component of a NURD complex that contains let-418, hda-1, lin-40 and lin-53 (PubMed:21060680). Interacts with lin-1 (PubMed:17466968). Interacts with pie-1 (PubMed:12507426). Interacts with akir-1 (PubMed:30036395).</text>
</comment>
<comment type="interaction">
    <interactant intactId="EBI-3831970">
        <id>G5EBZ4</id>
    </interactant>
    <interactant intactId="EBI-319858">
        <id>Q21502</id>
        <label>mep-1</label>
    </interactant>
    <organismsDiffer>false</organismsDiffer>
    <experiments>2</experiments>
</comment>
<comment type="subcellular location">
    <subcellularLocation>
        <location evidence="7 9">Nucleus</location>
    </subcellularLocation>
</comment>
<comment type="tissue specificity">
    <text evidence="8">Expressed in embryos and larva.</text>
</comment>
<comment type="developmental stage">
    <text evidence="8">Expressed in all interphase nuclei throughout development.</text>
</comment>
<comment type="disruption phenotype">
    <text evidence="8 10">Larval arrest, protruding vulva, sterile progeny.</text>
</comment>
<proteinExistence type="evidence at protein level"/>
<accession>G5EBZ4</accession>